<organism>
    <name type="scientific">Influenza A virus (strain A/Grey teal/Australia/2/1979 H4N4)</name>
    <dbReference type="NCBI Taxonomy" id="402464"/>
    <lineage>
        <taxon>Viruses</taxon>
        <taxon>Riboviria</taxon>
        <taxon>Orthornavirae</taxon>
        <taxon>Negarnaviricota</taxon>
        <taxon>Polyploviricotina</taxon>
        <taxon>Insthoviricetes</taxon>
        <taxon>Articulavirales</taxon>
        <taxon>Orthomyxoviridae</taxon>
        <taxon>Alphainfluenzavirus</taxon>
        <taxon>Alphainfluenzavirus influenzae</taxon>
        <taxon>Influenza A virus</taxon>
    </lineage>
</organism>
<feature type="chain" id="PRO_0000324265" description="Non-structural protein 1">
    <location>
        <begin position="1"/>
        <end position="230"/>
    </location>
</feature>
<feature type="region of interest" description="RNA-binding and homodimerization" evidence="1">
    <location>
        <begin position="1"/>
        <end position="73"/>
    </location>
</feature>
<feature type="region of interest" description="CPSF4-binding" evidence="1">
    <location>
        <begin position="180"/>
        <end position="215"/>
    </location>
</feature>
<feature type="region of interest" description="Disordered" evidence="2">
    <location>
        <begin position="205"/>
        <end position="230"/>
    </location>
</feature>
<feature type="region of interest" description="PABPN1-binding" evidence="1">
    <location>
        <begin position="223"/>
        <end position="230"/>
    </location>
</feature>
<feature type="short sequence motif" description="Nuclear localization signal" evidence="1">
    <location>
        <begin position="34"/>
        <end position="38"/>
    </location>
</feature>
<feature type="short sequence motif" description="Nuclear export signal" evidence="1">
    <location>
        <begin position="137"/>
        <end position="146"/>
    </location>
</feature>
<dbReference type="EMBL" id="CY005675">
    <property type="protein sequence ID" value="ABB20366.1"/>
    <property type="molecule type" value="Genomic_RNA"/>
</dbReference>
<dbReference type="SMR" id="Q20PL8"/>
<dbReference type="Proteomes" id="UP000008575">
    <property type="component" value="Genome"/>
</dbReference>
<dbReference type="GO" id="GO:0030430">
    <property type="term" value="C:host cell cytoplasm"/>
    <property type="evidence" value="ECO:0007669"/>
    <property type="project" value="UniProtKB-SubCell"/>
</dbReference>
<dbReference type="GO" id="GO:0042025">
    <property type="term" value="C:host cell nucleus"/>
    <property type="evidence" value="ECO:0007669"/>
    <property type="project" value="UniProtKB-SubCell"/>
</dbReference>
<dbReference type="GO" id="GO:0030291">
    <property type="term" value="F:protein serine/threonine kinase inhibitor activity"/>
    <property type="evidence" value="ECO:0007669"/>
    <property type="project" value="UniProtKB-KW"/>
</dbReference>
<dbReference type="GO" id="GO:0003723">
    <property type="term" value="F:RNA binding"/>
    <property type="evidence" value="ECO:0007669"/>
    <property type="project" value="UniProtKB-KW"/>
</dbReference>
<dbReference type="GO" id="GO:0039540">
    <property type="term" value="P:symbiont-mediated suppression of host cytoplasmic pattern recognition receptor signaling pathway via inhibition of RIG-I activity"/>
    <property type="evidence" value="ECO:0007669"/>
    <property type="project" value="UniProtKB-KW"/>
</dbReference>
<dbReference type="GO" id="GO:0039657">
    <property type="term" value="P:symbiont-mediated suppression of host gene expression"/>
    <property type="evidence" value="ECO:0007669"/>
    <property type="project" value="UniProtKB-KW"/>
</dbReference>
<dbReference type="GO" id="GO:0039524">
    <property type="term" value="P:symbiont-mediated suppression of host mRNA processing"/>
    <property type="evidence" value="ECO:0007669"/>
    <property type="project" value="UniProtKB-KW"/>
</dbReference>
<dbReference type="GO" id="GO:0039580">
    <property type="term" value="P:symbiont-mediated suppression of host PKR/eIFalpha signaling"/>
    <property type="evidence" value="ECO:0007669"/>
    <property type="project" value="UniProtKB-KW"/>
</dbReference>
<dbReference type="GO" id="GO:0039502">
    <property type="term" value="P:symbiont-mediated suppression of host type I interferon-mediated signaling pathway"/>
    <property type="evidence" value="ECO:0007669"/>
    <property type="project" value="UniProtKB-KW"/>
</dbReference>
<dbReference type="FunFam" id="1.10.287.10:FF:000001">
    <property type="entry name" value="Non-structural protein 1"/>
    <property type="match status" value="1"/>
</dbReference>
<dbReference type="FunFam" id="3.30.420.330:FF:000001">
    <property type="entry name" value="Non-structural protein 1"/>
    <property type="match status" value="1"/>
</dbReference>
<dbReference type="Gene3D" id="3.30.420.330">
    <property type="entry name" value="Influenza virus non-structural protein, effector domain"/>
    <property type="match status" value="1"/>
</dbReference>
<dbReference type="Gene3D" id="1.10.287.10">
    <property type="entry name" value="S15/NS1, RNA-binding"/>
    <property type="match status" value="1"/>
</dbReference>
<dbReference type="HAMAP" id="MF_04066">
    <property type="entry name" value="INFV_NS1"/>
    <property type="match status" value="1"/>
</dbReference>
<dbReference type="InterPro" id="IPR004208">
    <property type="entry name" value="NS1"/>
</dbReference>
<dbReference type="InterPro" id="IPR000256">
    <property type="entry name" value="NS1A"/>
</dbReference>
<dbReference type="InterPro" id="IPR038064">
    <property type="entry name" value="NS1A_effect_dom-like_sf"/>
</dbReference>
<dbReference type="InterPro" id="IPR009068">
    <property type="entry name" value="uS15_NS1_RNA-bd_sf"/>
</dbReference>
<dbReference type="Pfam" id="PF00600">
    <property type="entry name" value="Flu_NS1"/>
    <property type="match status" value="1"/>
</dbReference>
<dbReference type="SUPFAM" id="SSF143021">
    <property type="entry name" value="Ns1 effector domain-like"/>
    <property type="match status" value="1"/>
</dbReference>
<dbReference type="SUPFAM" id="SSF47060">
    <property type="entry name" value="S15/NS1 RNA-binding domain"/>
    <property type="match status" value="1"/>
</dbReference>
<protein>
    <recommendedName>
        <fullName evidence="1">Non-structural protein 1</fullName>
        <shortName evidence="1">NS1</shortName>
    </recommendedName>
    <alternativeName>
        <fullName evidence="1">NS1A</fullName>
    </alternativeName>
</protein>
<sequence length="230" mass="26043">MDSNTVSSFQVDCFLWHVRKRFADQELGDAPFLDRLRRDQKSLRGRGSTLGLDIETATRAGKQIVERILEEESDEALKMTIASVPASRYLTDMTLEEMSRDWFMLMPKQKVAGSLCIRMDQAIMDKNITLKANFSVIFDRLETLILLRAFTDEGAIVGEISPLPSLPGHTDEDVKNAIGVLIGGLEWNDNTVRVSETLQRFAWRSSNEDGRPPLPPKQKRKMARTVESEV</sequence>
<reference key="1">
    <citation type="journal article" date="2006" name="Science">
        <title>Large-scale sequence analysis of avian influenza isolates.</title>
        <authorList>
            <person name="Obenauer J.C."/>
            <person name="Denson J."/>
            <person name="Mehta P.K."/>
            <person name="Su X."/>
            <person name="Mukatira S."/>
            <person name="Finkelstein D.B."/>
            <person name="Xu X."/>
            <person name="Wang J."/>
            <person name="Ma J."/>
            <person name="Fan Y."/>
            <person name="Rakestraw K.M."/>
            <person name="Webster R.G."/>
            <person name="Hoffmann E."/>
            <person name="Krauss S."/>
            <person name="Zheng J."/>
            <person name="Zhang Z."/>
            <person name="Naeve C.W."/>
        </authorList>
    </citation>
    <scope>NUCLEOTIDE SEQUENCE [GENOMIC RNA]</scope>
</reference>
<evidence type="ECO:0000255" key="1">
    <source>
        <dbReference type="HAMAP-Rule" id="MF_04066"/>
    </source>
</evidence>
<evidence type="ECO:0000256" key="2">
    <source>
        <dbReference type="SAM" id="MobiDB-lite"/>
    </source>
</evidence>
<accession>Q20PL8</accession>
<comment type="function">
    <text evidence="1">Inhibits post-transcriptional processing of cellular pre-mRNA, by binding and inhibiting two cellular proteins that are required for the 3'-end processing of cellular pre-mRNAs: the 30 kDa cleavage and polyadenylation specificity factor/CPSF4 and the poly(A)-binding protein 2/PABPN1. In turn, unprocessed 3' end pre-mRNAs accumulate in the host nucleus and are no longer exported to the cytoplasm. Cellular protein synthesis is thereby shut off very early after virus infection. Viral protein synthesis is not affected by the inhibition of the cellular 3' end processing machinery because the poly(A) tails of viral mRNAs are produced by the viral polymerase through a stuttering mechanism. Prevents the establishment of the cellular antiviral state by inhibiting TRIM25-mediated RIGI ubiquitination, which normally triggers the antiviral transduction signal that leads to the activation of type I IFN genes by transcription factors IRF3 and IRF7. Also binds poly(A) and U6 snRNA. Inhibits the integrated stress response (ISR) in the infected cell by blocking dsRNA binding by EIF2AK2/PKR and further phosphorylation of EIF2S1/EIF-2ALPHA. Stress granule formation is thus inhibited, which allows protein synthesis and viral replication.</text>
</comment>
<comment type="subunit">
    <text evidence="1">Homodimer. Interacts with host TRIM25 (via coiled coil); this interaction specifically inhibits TRIM25 multimerization and TRIM25-mediated RIGI CARD ubiquitination. Interacts with human EIF2AK2/PKR, CPSF4, IVNS1ABP and PABPN1.</text>
</comment>
<comment type="subcellular location">
    <subcellularLocation>
        <location evidence="1">Host nucleus</location>
    </subcellularLocation>
    <subcellularLocation>
        <location evidence="1">Host cytoplasm</location>
    </subcellularLocation>
    <text evidence="1">In uninfected, transfected cells, NS1 is localized in the nucleus. Only in virus infected cells, the nuclear export signal is unveiled, presumably by a viral protein, and a fraction of NS1 is exported in the cytoplasm.</text>
</comment>
<comment type="alternative products">
    <event type="alternative splicing"/>
    <isoform>
        <id>Q20PL8-1</id>
        <name>NS1</name>
        <sequence type="displayed"/>
    </isoform>
    <isoform>
        <id>Q20PL9-1</id>
        <name>NEP</name>
        <name>NS2</name>
        <sequence type="external"/>
    </isoform>
</comment>
<comment type="domain">
    <text evidence="1">The dsRNA-binding region is required for suppression of RNA silencing.</text>
</comment>
<comment type="PTM">
    <text evidence="1">Upon interferon induction, ISGylated via host HERC5; this results in the impairment of NS1 interaction with RNA targets due to its inability to form homodimers and to interact with host EIF2AK2/PKR.</text>
</comment>
<comment type="similarity">
    <text evidence="1">Belongs to the influenza A viruses NS1 family.</text>
</comment>
<name>NS1_I79A7</name>
<gene>
    <name evidence="1" type="primary">NS</name>
</gene>
<keyword id="KW-0025">Alternative splicing</keyword>
<keyword id="KW-1262">Eukaryotic host gene expression shutoff by virus</keyword>
<keyword id="KW-1035">Host cytoplasm</keyword>
<keyword id="KW-1190">Host gene expression shutoff by virus</keyword>
<keyword id="KW-1192">Host mRNA suppression by virus</keyword>
<keyword id="KW-1048">Host nucleus</keyword>
<keyword id="KW-0945">Host-virus interaction</keyword>
<keyword id="KW-1090">Inhibition of host innate immune response by virus</keyword>
<keyword id="KW-1114">Inhibition of host interferon signaling pathway by virus</keyword>
<keyword id="KW-1102">Inhibition of host PKR by virus</keyword>
<keyword id="KW-1103">Inhibition of host pre-mRNA processing by virus</keyword>
<keyword id="KW-1088">Inhibition of host RIG-I by virus</keyword>
<keyword id="KW-1113">Inhibition of host RLR pathway by virus</keyword>
<keyword id="KW-0922">Interferon antiviral system evasion</keyword>
<keyword id="KW-0694">RNA-binding</keyword>
<keyword id="KW-0832">Ubl conjugation</keyword>
<keyword id="KW-0899">Viral immunoevasion</keyword>
<proteinExistence type="inferred from homology"/>
<organismHost>
    <name type="scientific">Aves</name>
    <dbReference type="NCBI Taxonomy" id="8782"/>
</organismHost>